<evidence type="ECO:0000255" key="1">
    <source>
        <dbReference type="HAMAP-Rule" id="MF_01523"/>
    </source>
</evidence>
<name>RSMJ_FRATT</name>
<protein>
    <recommendedName>
        <fullName evidence="1">Ribosomal RNA small subunit methyltransferase J</fullName>
        <ecNumber evidence="1">2.1.1.242</ecNumber>
    </recommendedName>
    <alternativeName>
        <fullName evidence="1">16S rRNA m2G1516 methyltransferase</fullName>
    </alternativeName>
    <alternativeName>
        <fullName evidence="1">rRNA (guanine-N(2)-)-methyltransferase</fullName>
    </alternativeName>
</protein>
<dbReference type="EC" id="2.1.1.242" evidence="1"/>
<dbReference type="EMBL" id="AJ749949">
    <property type="protein sequence ID" value="CAG46137.1"/>
    <property type="molecule type" value="Genomic_DNA"/>
</dbReference>
<dbReference type="RefSeq" id="WP_003014447.1">
    <property type="nucleotide sequence ID" value="NZ_CP010290.1"/>
</dbReference>
<dbReference type="RefSeq" id="YP_170438.1">
    <property type="nucleotide sequence ID" value="NC_006570.2"/>
</dbReference>
<dbReference type="SMR" id="Q5NEV4"/>
<dbReference type="STRING" id="177416.FTT_1504"/>
<dbReference type="DNASU" id="3192496"/>
<dbReference type="EnsemblBacteria" id="CAG46137">
    <property type="protein sequence ID" value="CAG46137"/>
    <property type="gene ID" value="FTT_1504"/>
</dbReference>
<dbReference type="KEGG" id="ftu:FTT_1504"/>
<dbReference type="eggNOG" id="COG0742">
    <property type="taxonomic scope" value="Bacteria"/>
</dbReference>
<dbReference type="OrthoDB" id="3191794at2"/>
<dbReference type="Proteomes" id="UP000001174">
    <property type="component" value="Chromosome"/>
</dbReference>
<dbReference type="GO" id="GO:0005737">
    <property type="term" value="C:cytoplasm"/>
    <property type="evidence" value="ECO:0007669"/>
    <property type="project" value="UniProtKB-SubCell"/>
</dbReference>
<dbReference type="GO" id="GO:0008990">
    <property type="term" value="F:rRNA (guanine-N2-)-methyltransferase activity"/>
    <property type="evidence" value="ECO:0007669"/>
    <property type="project" value="UniProtKB-UniRule"/>
</dbReference>
<dbReference type="CDD" id="cd02440">
    <property type="entry name" value="AdoMet_MTases"/>
    <property type="match status" value="1"/>
</dbReference>
<dbReference type="Gene3D" id="3.40.50.150">
    <property type="entry name" value="Vaccinia Virus protein VP39"/>
    <property type="match status" value="1"/>
</dbReference>
<dbReference type="HAMAP" id="MF_01523">
    <property type="entry name" value="16SrRNA_methyltr_J"/>
    <property type="match status" value="1"/>
</dbReference>
<dbReference type="InterPro" id="IPR007536">
    <property type="entry name" value="16SrRNA_methylTrfase_J"/>
</dbReference>
<dbReference type="InterPro" id="IPR029063">
    <property type="entry name" value="SAM-dependent_MTases_sf"/>
</dbReference>
<dbReference type="PANTHER" id="PTHR36112">
    <property type="entry name" value="RIBOSOMAL RNA SMALL SUBUNIT METHYLTRANSFERASE J"/>
    <property type="match status" value="1"/>
</dbReference>
<dbReference type="PANTHER" id="PTHR36112:SF1">
    <property type="entry name" value="RIBOSOMAL RNA SMALL SUBUNIT METHYLTRANSFERASE J"/>
    <property type="match status" value="1"/>
</dbReference>
<dbReference type="Pfam" id="PF04445">
    <property type="entry name" value="SAM_MT"/>
    <property type="match status" value="1"/>
</dbReference>
<dbReference type="SUPFAM" id="SSF53335">
    <property type="entry name" value="S-adenosyl-L-methionine-dependent methyltransferases"/>
    <property type="match status" value="1"/>
</dbReference>
<proteinExistence type="inferred from homology"/>
<feature type="chain" id="PRO_0000244272" description="Ribosomal RNA small subunit methyltransferase J">
    <location>
        <begin position="1"/>
        <end position="241"/>
    </location>
</feature>
<feature type="binding site" evidence="1">
    <location>
        <begin position="94"/>
        <end position="95"/>
    </location>
    <ligand>
        <name>S-adenosyl-L-methionine</name>
        <dbReference type="ChEBI" id="CHEBI:59789"/>
    </ligand>
</feature>
<feature type="binding site" evidence="1">
    <location>
        <position position="163"/>
    </location>
    <ligand>
        <name>S-adenosyl-L-methionine</name>
        <dbReference type="ChEBI" id="CHEBI:59789"/>
    </ligand>
</feature>
<accession>Q5NEV4</accession>
<gene>
    <name evidence="1" type="primary">rsmJ</name>
    <name type="ordered locus">FTT_1504</name>
</gene>
<comment type="function">
    <text evidence="1">Specifically methylates the guanosine in position 1516 of 16S rRNA.</text>
</comment>
<comment type="catalytic activity">
    <reaction evidence="1">
        <text>guanosine(1516) in 16S rRNA + S-adenosyl-L-methionine = N(2)-methylguanosine(1516) in 16S rRNA + S-adenosyl-L-homocysteine + H(+)</text>
        <dbReference type="Rhea" id="RHEA:43220"/>
        <dbReference type="Rhea" id="RHEA-COMP:10412"/>
        <dbReference type="Rhea" id="RHEA-COMP:10413"/>
        <dbReference type="ChEBI" id="CHEBI:15378"/>
        <dbReference type="ChEBI" id="CHEBI:57856"/>
        <dbReference type="ChEBI" id="CHEBI:59789"/>
        <dbReference type="ChEBI" id="CHEBI:74269"/>
        <dbReference type="ChEBI" id="CHEBI:74481"/>
        <dbReference type="EC" id="2.1.1.242"/>
    </reaction>
</comment>
<comment type="subcellular location">
    <subcellularLocation>
        <location evidence="1">Cytoplasm</location>
    </subcellularLocation>
</comment>
<comment type="similarity">
    <text evidence="1">Belongs to the methyltransferase superfamily. RsmJ family.</text>
</comment>
<reference key="1">
    <citation type="journal article" date="2005" name="Nat. Genet.">
        <title>The complete genome sequence of Francisella tularensis, the causative agent of tularemia.</title>
        <authorList>
            <person name="Larsson P."/>
            <person name="Oyston P.C.F."/>
            <person name="Chain P."/>
            <person name="Chu M.C."/>
            <person name="Duffield M."/>
            <person name="Fuxelius H.-H."/>
            <person name="Garcia E."/>
            <person name="Haelltorp G."/>
            <person name="Johansson D."/>
            <person name="Isherwood K.E."/>
            <person name="Karp P.D."/>
            <person name="Larsson E."/>
            <person name="Liu Y."/>
            <person name="Michell S."/>
            <person name="Prior J."/>
            <person name="Prior R."/>
            <person name="Malfatti S."/>
            <person name="Sjoestedt A."/>
            <person name="Svensson K."/>
            <person name="Thompson N."/>
            <person name="Vergez L."/>
            <person name="Wagg J.K."/>
            <person name="Wren B.W."/>
            <person name="Lindler L.E."/>
            <person name="Andersson S.G.E."/>
            <person name="Forsman M."/>
            <person name="Titball R.W."/>
        </authorList>
    </citation>
    <scope>NUCLEOTIDE SEQUENCE [LARGE SCALE GENOMIC DNA]</scope>
    <source>
        <strain>SCHU S4 / Schu 4</strain>
    </source>
</reference>
<keyword id="KW-0963">Cytoplasm</keyword>
<keyword id="KW-0489">Methyltransferase</keyword>
<keyword id="KW-1185">Reference proteome</keyword>
<keyword id="KW-0698">rRNA processing</keyword>
<keyword id="KW-0949">S-adenosyl-L-methionine</keyword>
<keyword id="KW-0808">Transferase</keyword>
<sequence>MQINISNLDVKNHLDKFIEDRLEYEFCKQDKYLYLENDNLKLHYNNKELFIDFNDSEILNRINPKTKKCSVVQAIEGRSKAKLTILDTTAGLGRDTFTLAARGHTLLTLEKDSYLYLLLKDALQRAQQINYLKEIANRITLINIDSNEYILTTDKSFDCVYVDPMFPPRKKSAKVKQGMQILHQVGFNDEVSNSNLLDNIIQTQISPKAVVKRPINAEFLSNKKPSSQLKGKTNRFDIYSL</sequence>
<organism>
    <name type="scientific">Francisella tularensis subsp. tularensis (strain SCHU S4 / Schu 4)</name>
    <dbReference type="NCBI Taxonomy" id="177416"/>
    <lineage>
        <taxon>Bacteria</taxon>
        <taxon>Pseudomonadati</taxon>
        <taxon>Pseudomonadota</taxon>
        <taxon>Gammaproteobacteria</taxon>
        <taxon>Thiotrichales</taxon>
        <taxon>Francisellaceae</taxon>
        <taxon>Francisella</taxon>
    </lineage>
</organism>